<evidence type="ECO:0000269" key="1">
    <source>
    </source>
</evidence>
<evidence type="ECO:0000269" key="2">
    <source>
    </source>
</evidence>
<evidence type="ECO:0000269" key="3">
    <source>
    </source>
</evidence>
<evidence type="ECO:0000305" key="4"/>
<evidence type="ECO:0007829" key="5">
    <source>
        <dbReference type="PDB" id="5N9J"/>
    </source>
</evidence>
<name>MED10_SCHPO</name>
<gene>
    <name type="primary">med10</name>
    <name type="synonym">nut2</name>
    <name type="ORF">SPBC31F10.09c</name>
</gene>
<comment type="function">
    <text>Component of the Mediator complex, a coactivator involved in the regulated transcription of nearly all RNA polymerase II-dependent genes. Mediator functions as a bridge to convey information from gene-specific regulatory proteins to the basal RNA polymerase II transcription machinery. Mediator is recruited to promoters by direct interactions with regulatory proteins and serves as a scaffold for the assembly of a functional preinitiation complex with RNA polymerase II and the general transcription factors.</text>
</comment>
<comment type="subunit">
    <text evidence="1 2">Component of the Mediator complex.</text>
</comment>
<comment type="subcellular location">
    <subcellularLocation>
        <location evidence="3">Cytoplasm</location>
    </subcellularLocation>
    <subcellularLocation>
        <location evidence="3">Nucleus</location>
    </subcellularLocation>
    <subcellularLocation>
        <location evidence="3">Nucleus envelope</location>
    </subcellularLocation>
</comment>
<comment type="similarity">
    <text evidence="4">Belongs to the Mediator complex subunit 10 family.</text>
</comment>
<feature type="chain" id="PRO_0000096356" description="Mediator of RNA polymerase II transcription subunit 10">
    <location>
        <begin position="1"/>
        <end position="144"/>
    </location>
</feature>
<feature type="helix" evidence="5">
    <location>
        <begin position="9"/>
        <end position="33"/>
    </location>
</feature>
<feature type="helix" evidence="5">
    <location>
        <begin position="43"/>
        <end position="65"/>
    </location>
</feature>
<feature type="strand" evidence="5">
    <location>
        <begin position="68"/>
        <end position="70"/>
    </location>
</feature>
<feature type="helix" evidence="5">
    <location>
        <begin position="71"/>
        <end position="78"/>
    </location>
</feature>
<feature type="helix" evidence="5">
    <location>
        <begin position="83"/>
        <end position="122"/>
    </location>
</feature>
<feature type="helix" evidence="5">
    <location>
        <begin position="124"/>
        <end position="126"/>
    </location>
</feature>
<feature type="helix" evidence="5">
    <location>
        <begin position="127"/>
        <end position="137"/>
    </location>
</feature>
<organism>
    <name type="scientific">Schizosaccharomyces pombe (strain 972 / ATCC 24843)</name>
    <name type="common">Fission yeast</name>
    <dbReference type="NCBI Taxonomy" id="284812"/>
    <lineage>
        <taxon>Eukaryota</taxon>
        <taxon>Fungi</taxon>
        <taxon>Dikarya</taxon>
        <taxon>Ascomycota</taxon>
        <taxon>Taphrinomycotina</taxon>
        <taxon>Schizosaccharomycetes</taxon>
        <taxon>Schizosaccharomycetales</taxon>
        <taxon>Schizosaccharomycetaceae</taxon>
        <taxon>Schizosaccharomyces</taxon>
    </lineage>
</organism>
<protein>
    <recommendedName>
        <fullName>Mediator of RNA polymerase II transcription subunit 10</fullName>
    </recommendedName>
    <alternativeName>
        <fullName>Mediator complex subunit 10</fullName>
    </alternativeName>
</protein>
<reference key="1">
    <citation type="journal article" date="2002" name="Nature">
        <title>The genome sequence of Schizosaccharomyces pombe.</title>
        <authorList>
            <person name="Wood V."/>
            <person name="Gwilliam R."/>
            <person name="Rajandream M.A."/>
            <person name="Lyne M.H."/>
            <person name="Lyne R."/>
            <person name="Stewart A."/>
            <person name="Sgouros J.G."/>
            <person name="Peat N."/>
            <person name="Hayles J."/>
            <person name="Baker S.G."/>
            <person name="Basham D."/>
            <person name="Bowman S."/>
            <person name="Brooks K."/>
            <person name="Brown D."/>
            <person name="Brown S."/>
            <person name="Chillingworth T."/>
            <person name="Churcher C.M."/>
            <person name="Collins M."/>
            <person name="Connor R."/>
            <person name="Cronin A."/>
            <person name="Davis P."/>
            <person name="Feltwell T."/>
            <person name="Fraser A."/>
            <person name="Gentles S."/>
            <person name="Goble A."/>
            <person name="Hamlin N."/>
            <person name="Harris D.E."/>
            <person name="Hidalgo J."/>
            <person name="Hodgson G."/>
            <person name="Holroyd S."/>
            <person name="Hornsby T."/>
            <person name="Howarth S."/>
            <person name="Huckle E.J."/>
            <person name="Hunt S."/>
            <person name="Jagels K."/>
            <person name="James K.D."/>
            <person name="Jones L."/>
            <person name="Jones M."/>
            <person name="Leather S."/>
            <person name="McDonald S."/>
            <person name="McLean J."/>
            <person name="Mooney P."/>
            <person name="Moule S."/>
            <person name="Mungall K.L."/>
            <person name="Murphy L.D."/>
            <person name="Niblett D."/>
            <person name="Odell C."/>
            <person name="Oliver K."/>
            <person name="O'Neil S."/>
            <person name="Pearson D."/>
            <person name="Quail M.A."/>
            <person name="Rabbinowitsch E."/>
            <person name="Rutherford K.M."/>
            <person name="Rutter S."/>
            <person name="Saunders D."/>
            <person name="Seeger K."/>
            <person name="Sharp S."/>
            <person name="Skelton J."/>
            <person name="Simmonds M.N."/>
            <person name="Squares R."/>
            <person name="Squares S."/>
            <person name="Stevens K."/>
            <person name="Taylor K."/>
            <person name="Taylor R.G."/>
            <person name="Tivey A."/>
            <person name="Walsh S.V."/>
            <person name="Warren T."/>
            <person name="Whitehead S."/>
            <person name="Woodward J.R."/>
            <person name="Volckaert G."/>
            <person name="Aert R."/>
            <person name="Robben J."/>
            <person name="Grymonprez B."/>
            <person name="Weltjens I."/>
            <person name="Vanstreels E."/>
            <person name="Rieger M."/>
            <person name="Schaefer M."/>
            <person name="Mueller-Auer S."/>
            <person name="Gabel C."/>
            <person name="Fuchs M."/>
            <person name="Duesterhoeft A."/>
            <person name="Fritzc C."/>
            <person name="Holzer E."/>
            <person name="Moestl D."/>
            <person name="Hilbert H."/>
            <person name="Borzym K."/>
            <person name="Langer I."/>
            <person name="Beck A."/>
            <person name="Lehrach H."/>
            <person name="Reinhardt R."/>
            <person name="Pohl T.M."/>
            <person name="Eger P."/>
            <person name="Zimmermann W."/>
            <person name="Wedler H."/>
            <person name="Wambutt R."/>
            <person name="Purnelle B."/>
            <person name="Goffeau A."/>
            <person name="Cadieu E."/>
            <person name="Dreano S."/>
            <person name="Gloux S."/>
            <person name="Lelaure V."/>
            <person name="Mottier S."/>
            <person name="Galibert F."/>
            <person name="Aves S.J."/>
            <person name="Xiang Z."/>
            <person name="Hunt C."/>
            <person name="Moore K."/>
            <person name="Hurst S.M."/>
            <person name="Lucas M."/>
            <person name="Rochet M."/>
            <person name="Gaillardin C."/>
            <person name="Tallada V.A."/>
            <person name="Garzon A."/>
            <person name="Thode G."/>
            <person name="Daga R.R."/>
            <person name="Cruzado L."/>
            <person name="Jimenez J."/>
            <person name="Sanchez M."/>
            <person name="del Rey F."/>
            <person name="Benito J."/>
            <person name="Dominguez A."/>
            <person name="Revuelta J.L."/>
            <person name="Moreno S."/>
            <person name="Armstrong J."/>
            <person name="Forsburg S.L."/>
            <person name="Cerutti L."/>
            <person name="Lowe T."/>
            <person name="McCombie W.R."/>
            <person name="Paulsen I."/>
            <person name="Potashkin J."/>
            <person name="Shpakovski G.V."/>
            <person name="Ussery D."/>
            <person name="Barrell B.G."/>
            <person name="Nurse P."/>
        </authorList>
    </citation>
    <scope>NUCLEOTIDE SEQUENCE [LARGE SCALE GENOMIC DNA]</scope>
    <source>
        <strain>972 / ATCC 24843</strain>
    </source>
</reference>
<reference key="2">
    <citation type="journal article" date="2011" name="Science">
        <title>Comparative functional genomics of the fission yeasts.</title>
        <authorList>
            <person name="Rhind N."/>
            <person name="Chen Z."/>
            <person name="Yassour M."/>
            <person name="Thompson D.A."/>
            <person name="Haas B.J."/>
            <person name="Habib N."/>
            <person name="Wapinski I."/>
            <person name="Roy S."/>
            <person name="Lin M.F."/>
            <person name="Heiman D.I."/>
            <person name="Young S.K."/>
            <person name="Furuya K."/>
            <person name="Guo Y."/>
            <person name="Pidoux A."/>
            <person name="Chen H.M."/>
            <person name="Robbertse B."/>
            <person name="Goldberg J.M."/>
            <person name="Aoki K."/>
            <person name="Bayne E.H."/>
            <person name="Berlin A.M."/>
            <person name="Desjardins C.A."/>
            <person name="Dobbs E."/>
            <person name="Dukaj L."/>
            <person name="Fan L."/>
            <person name="FitzGerald M.G."/>
            <person name="French C."/>
            <person name="Gujja S."/>
            <person name="Hansen K."/>
            <person name="Keifenheim D."/>
            <person name="Levin J.Z."/>
            <person name="Mosher R.A."/>
            <person name="Mueller C.A."/>
            <person name="Pfiffner J."/>
            <person name="Priest M."/>
            <person name="Russ C."/>
            <person name="Smialowska A."/>
            <person name="Swoboda P."/>
            <person name="Sykes S.M."/>
            <person name="Vaughn M."/>
            <person name="Vengrova S."/>
            <person name="Yoder R."/>
            <person name="Zeng Q."/>
            <person name="Allshire R."/>
            <person name="Baulcombe D."/>
            <person name="Birren B.W."/>
            <person name="Brown W."/>
            <person name="Ekwall K."/>
            <person name="Kellis M."/>
            <person name="Leatherwood J."/>
            <person name="Levin H."/>
            <person name="Margalit H."/>
            <person name="Martienssen R."/>
            <person name="Nieduszynski C.A."/>
            <person name="Spatafora J.W."/>
            <person name="Friedman N."/>
            <person name="Dalgaard J.Z."/>
            <person name="Baumann P."/>
            <person name="Niki H."/>
            <person name="Regev A."/>
            <person name="Nusbaum C."/>
        </authorList>
    </citation>
    <scope>REVISION OF GENE MODEL</scope>
</reference>
<reference key="3">
    <citation type="journal article" date="2000" name="J. Biol. Chem.">
        <title>Purification and characterization of RNA polymerase II holoenzyme from Schizosaccharomyces pombe.</title>
        <authorList>
            <person name="Spaehr H."/>
            <person name="Beve J."/>
            <person name="Larsson T."/>
            <person name="Bergstroem J."/>
            <person name="Karlsson K.-A."/>
            <person name="Gustafsson C.M."/>
        </authorList>
    </citation>
    <scope>IDENTIFICATION BY MASS SPECTROMETRY</scope>
    <scope>IDENTIFICATION IN THE MEDIATOR COMPLEX</scope>
    <source>
        <strain>972 / ATCC 24843</strain>
    </source>
</reference>
<reference key="4">
    <citation type="journal article" date="2001" name="Proc. Natl. Acad. Sci. U.S.A.">
        <title>Analysis of Schizosaccharomyces pombe mediator reveals a set of essential subunits conserved between yeast and metazoan cells.</title>
        <authorList>
            <person name="Spaehr H."/>
            <person name="Samuelsen C.O."/>
            <person name="Baraznenok V."/>
            <person name="Ernest I."/>
            <person name="Huylebroeck D."/>
            <person name="Remacle J.E."/>
            <person name="Samuelsson T."/>
            <person name="Kieselbach T."/>
            <person name="Holmberg S."/>
            <person name="Gustafsson C.M."/>
        </authorList>
    </citation>
    <scope>IDENTIFICATION BY MASS SPECTROMETRY</scope>
    <scope>IDENTIFICATION IN THE MEDIATOR COMPLEX</scope>
</reference>
<reference key="5">
    <citation type="journal article" date="2006" name="Nat. Biotechnol.">
        <title>ORFeome cloning and global analysis of protein localization in the fission yeast Schizosaccharomyces pombe.</title>
        <authorList>
            <person name="Matsuyama A."/>
            <person name="Arai R."/>
            <person name="Yashiroda Y."/>
            <person name="Shirai A."/>
            <person name="Kamata A."/>
            <person name="Sekido S."/>
            <person name="Kobayashi Y."/>
            <person name="Hashimoto A."/>
            <person name="Hamamoto M."/>
            <person name="Hiraoka Y."/>
            <person name="Horinouchi S."/>
            <person name="Yoshida M."/>
        </authorList>
    </citation>
    <scope>SUBCELLULAR LOCATION [LARGE SCALE ANALYSIS]</scope>
</reference>
<sequence>MLPQDDMTDEMKSLASRLEDTTQAFYDLALIVYNLEDTTPSDAIPESLDTLIRDLKSLPDISRKVNNLIPQDVLEYIEQGRNPDVYARQFSELVQKDNQYVNGKLYAIEGFQKAFAEEIKQAYPEVSSVVDKILNEGKVESTVS</sequence>
<accession>P87310</accession>
<keyword id="KW-0002">3D-structure</keyword>
<keyword id="KW-0010">Activator</keyword>
<keyword id="KW-0963">Cytoplasm</keyword>
<keyword id="KW-0539">Nucleus</keyword>
<keyword id="KW-1185">Reference proteome</keyword>
<keyword id="KW-0804">Transcription</keyword>
<keyword id="KW-0805">Transcription regulation</keyword>
<dbReference type="EMBL" id="CU329671">
    <property type="protein sequence ID" value="CAB10086.2"/>
    <property type="molecule type" value="Genomic_DNA"/>
</dbReference>
<dbReference type="PIR" id="T40212">
    <property type="entry name" value="T40212"/>
</dbReference>
<dbReference type="RefSeq" id="NP_596571.2">
    <property type="nucleotide sequence ID" value="NM_001022492.2"/>
</dbReference>
<dbReference type="PDB" id="5N9J">
    <property type="method" value="X-ray"/>
    <property type="resolution" value="3.40 A"/>
    <property type="chains" value="B=1-144"/>
</dbReference>
<dbReference type="PDBsum" id="5N9J"/>
<dbReference type="SMR" id="P87310"/>
<dbReference type="BioGRID" id="276803">
    <property type="interactions" value="6"/>
</dbReference>
<dbReference type="FunCoup" id="P87310">
    <property type="interactions" value="437"/>
</dbReference>
<dbReference type="IntAct" id="P87310">
    <property type="interactions" value="27"/>
</dbReference>
<dbReference type="STRING" id="284812.P87310"/>
<dbReference type="iPTMnet" id="P87310"/>
<dbReference type="PaxDb" id="4896-SPBC31F10.09c.1"/>
<dbReference type="EnsemblFungi" id="SPBC31F10.09c.1">
    <property type="protein sequence ID" value="SPBC31F10.09c.1:pep"/>
    <property type="gene ID" value="SPBC31F10.09c"/>
</dbReference>
<dbReference type="GeneID" id="2540272"/>
<dbReference type="KEGG" id="spo:2540272"/>
<dbReference type="PomBase" id="SPBC31F10.09c">
    <property type="gene designation" value="med10"/>
</dbReference>
<dbReference type="VEuPathDB" id="FungiDB:SPBC31F10.09c"/>
<dbReference type="eggNOG" id="KOG3046">
    <property type="taxonomic scope" value="Eukaryota"/>
</dbReference>
<dbReference type="HOGENOM" id="CLU_096169_1_1_1"/>
<dbReference type="InParanoid" id="P87310"/>
<dbReference type="OMA" id="QYQRAKM"/>
<dbReference type="PRO" id="PR:P87310"/>
<dbReference type="Proteomes" id="UP000002485">
    <property type="component" value="Chromosome II"/>
</dbReference>
<dbReference type="GO" id="GO:0005737">
    <property type="term" value="C:cytoplasm"/>
    <property type="evidence" value="ECO:0007669"/>
    <property type="project" value="UniProtKB-SubCell"/>
</dbReference>
<dbReference type="GO" id="GO:0016592">
    <property type="term" value="C:mediator complex"/>
    <property type="evidence" value="ECO:0000314"/>
    <property type="project" value="PomBase"/>
</dbReference>
<dbReference type="GO" id="GO:0005635">
    <property type="term" value="C:nuclear envelope"/>
    <property type="evidence" value="ECO:0007669"/>
    <property type="project" value="UniProtKB-SubCell"/>
</dbReference>
<dbReference type="GO" id="GO:0005634">
    <property type="term" value="C:nucleus"/>
    <property type="evidence" value="ECO:0007005"/>
    <property type="project" value="PomBase"/>
</dbReference>
<dbReference type="GO" id="GO:0003713">
    <property type="term" value="F:transcription coactivator activity"/>
    <property type="evidence" value="ECO:0000304"/>
    <property type="project" value="PomBase"/>
</dbReference>
<dbReference type="GO" id="GO:0060261">
    <property type="term" value="P:positive regulation of transcription initiation by RNA polymerase II"/>
    <property type="evidence" value="ECO:0000269"/>
    <property type="project" value="PomBase"/>
</dbReference>
<dbReference type="InterPro" id="IPR019145">
    <property type="entry name" value="Mediator_Med10"/>
</dbReference>
<dbReference type="Pfam" id="PF09748">
    <property type="entry name" value="Med10"/>
    <property type="match status" value="1"/>
</dbReference>
<proteinExistence type="evidence at protein level"/>